<gene>
    <name evidence="1" type="primary">luxS</name>
    <name type="ordered locus">YPTS_0866</name>
</gene>
<feature type="chain" id="PRO_1000093335" description="S-ribosylhomocysteine lyase">
    <location>
        <begin position="1"/>
        <end position="171"/>
    </location>
</feature>
<feature type="binding site" evidence="1">
    <location>
        <position position="54"/>
    </location>
    <ligand>
        <name>Fe cation</name>
        <dbReference type="ChEBI" id="CHEBI:24875"/>
    </ligand>
</feature>
<feature type="binding site" evidence="1">
    <location>
        <position position="58"/>
    </location>
    <ligand>
        <name>Fe cation</name>
        <dbReference type="ChEBI" id="CHEBI:24875"/>
    </ligand>
</feature>
<feature type="binding site" evidence="1">
    <location>
        <position position="128"/>
    </location>
    <ligand>
        <name>Fe cation</name>
        <dbReference type="ChEBI" id="CHEBI:24875"/>
    </ligand>
</feature>
<accession>B2K5Y4</accession>
<evidence type="ECO:0000255" key="1">
    <source>
        <dbReference type="HAMAP-Rule" id="MF_00091"/>
    </source>
</evidence>
<sequence length="171" mass="19396">MPLLDSFTVDHTIMKAPAVRVAKTMKTPHGDEITVFDLRFCVPNKEVMPEKGIHTLEHLFAGFMRDHLNGDGVEIIDISPMGCRTGFYMSLIGTPDEQRVADAWKAAMADVLKVTDQRKIPELNEYQCGTYHMHSLEEAQSIAKDILDRDVRINHNEELALPKEKLTELHI</sequence>
<reference key="1">
    <citation type="submission" date="2008-04" db="EMBL/GenBank/DDBJ databases">
        <title>Complete sequence of Yersinia pseudotuberculosis PB1/+.</title>
        <authorList>
            <person name="Copeland A."/>
            <person name="Lucas S."/>
            <person name="Lapidus A."/>
            <person name="Glavina del Rio T."/>
            <person name="Dalin E."/>
            <person name="Tice H."/>
            <person name="Bruce D."/>
            <person name="Goodwin L."/>
            <person name="Pitluck S."/>
            <person name="Munk A.C."/>
            <person name="Brettin T."/>
            <person name="Detter J.C."/>
            <person name="Han C."/>
            <person name="Tapia R."/>
            <person name="Schmutz J."/>
            <person name="Larimer F."/>
            <person name="Land M."/>
            <person name="Hauser L."/>
            <person name="Challacombe J.F."/>
            <person name="Green L."/>
            <person name="Lindler L.E."/>
            <person name="Nikolich M.P."/>
            <person name="Richardson P."/>
        </authorList>
    </citation>
    <scope>NUCLEOTIDE SEQUENCE [LARGE SCALE GENOMIC DNA]</scope>
    <source>
        <strain>PB1/+</strain>
    </source>
</reference>
<dbReference type="EC" id="4.4.1.21" evidence="1"/>
<dbReference type="EMBL" id="CP001048">
    <property type="protein sequence ID" value="ACC87850.1"/>
    <property type="molecule type" value="Genomic_DNA"/>
</dbReference>
<dbReference type="RefSeq" id="WP_002209453.1">
    <property type="nucleotide sequence ID" value="NZ_CP009780.1"/>
</dbReference>
<dbReference type="SMR" id="B2K5Y4"/>
<dbReference type="GeneID" id="57975413"/>
<dbReference type="KEGG" id="ypb:YPTS_0866"/>
<dbReference type="PATRIC" id="fig|502801.10.peg.199"/>
<dbReference type="GO" id="GO:0005506">
    <property type="term" value="F:iron ion binding"/>
    <property type="evidence" value="ECO:0007669"/>
    <property type="project" value="InterPro"/>
</dbReference>
<dbReference type="GO" id="GO:0043768">
    <property type="term" value="F:S-ribosylhomocysteine lyase activity"/>
    <property type="evidence" value="ECO:0007669"/>
    <property type="project" value="UniProtKB-UniRule"/>
</dbReference>
<dbReference type="GO" id="GO:0009372">
    <property type="term" value="P:quorum sensing"/>
    <property type="evidence" value="ECO:0007669"/>
    <property type="project" value="UniProtKB-UniRule"/>
</dbReference>
<dbReference type="FunFam" id="3.30.1360.80:FF:000001">
    <property type="entry name" value="S-ribosylhomocysteine lyase"/>
    <property type="match status" value="1"/>
</dbReference>
<dbReference type="Gene3D" id="3.30.1360.80">
    <property type="entry name" value="S-ribosylhomocysteinase (LuxS)"/>
    <property type="match status" value="1"/>
</dbReference>
<dbReference type="HAMAP" id="MF_00091">
    <property type="entry name" value="LuxS"/>
    <property type="match status" value="1"/>
</dbReference>
<dbReference type="InterPro" id="IPR037005">
    <property type="entry name" value="LuxS_sf"/>
</dbReference>
<dbReference type="InterPro" id="IPR011249">
    <property type="entry name" value="Metalloenz_LuxS/M16"/>
</dbReference>
<dbReference type="InterPro" id="IPR003815">
    <property type="entry name" value="S-ribosylhomocysteinase"/>
</dbReference>
<dbReference type="NCBIfam" id="NF002602">
    <property type="entry name" value="PRK02260.1-2"/>
    <property type="match status" value="1"/>
</dbReference>
<dbReference type="PANTHER" id="PTHR35799">
    <property type="entry name" value="S-RIBOSYLHOMOCYSTEINE LYASE"/>
    <property type="match status" value="1"/>
</dbReference>
<dbReference type="PANTHER" id="PTHR35799:SF1">
    <property type="entry name" value="S-RIBOSYLHOMOCYSTEINE LYASE"/>
    <property type="match status" value="1"/>
</dbReference>
<dbReference type="Pfam" id="PF02664">
    <property type="entry name" value="LuxS"/>
    <property type="match status" value="1"/>
</dbReference>
<dbReference type="PIRSF" id="PIRSF006160">
    <property type="entry name" value="AI2"/>
    <property type="match status" value="1"/>
</dbReference>
<dbReference type="PRINTS" id="PR01487">
    <property type="entry name" value="LUXSPROTEIN"/>
</dbReference>
<dbReference type="SUPFAM" id="SSF63411">
    <property type="entry name" value="LuxS/MPP-like metallohydrolase"/>
    <property type="match status" value="1"/>
</dbReference>
<protein>
    <recommendedName>
        <fullName evidence="1">S-ribosylhomocysteine lyase</fullName>
        <ecNumber evidence="1">4.4.1.21</ecNumber>
    </recommendedName>
    <alternativeName>
        <fullName evidence="1">AI-2 synthesis protein</fullName>
    </alternativeName>
    <alternativeName>
        <fullName evidence="1">Autoinducer-2 production protein LuxS</fullName>
    </alternativeName>
</protein>
<keyword id="KW-0071">Autoinducer synthesis</keyword>
<keyword id="KW-0408">Iron</keyword>
<keyword id="KW-0456">Lyase</keyword>
<keyword id="KW-0479">Metal-binding</keyword>
<keyword id="KW-0673">Quorum sensing</keyword>
<comment type="function">
    <text evidence="1">Involved in the synthesis of autoinducer 2 (AI-2) which is secreted by bacteria and is used to communicate both the cell density and the metabolic potential of the environment. The regulation of gene expression in response to changes in cell density is called quorum sensing. Catalyzes the transformation of S-ribosylhomocysteine (RHC) to homocysteine (HC) and 4,5-dihydroxy-2,3-pentadione (DPD).</text>
</comment>
<comment type="catalytic activity">
    <reaction evidence="1">
        <text>S-(5-deoxy-D-ribos-5-yl)-L-homocysteine = (S)-4,5-dihydroxypentane-2,3-dione + L-homocysteine</text>
        <dbReference type="Rhea" id="RHEA:17753"/>
        <dbReference type="ChEBI" id="CHEBI:29484"/>
        <dbReference type="ChEBI" id="CHEBI:58195"/>
        <dbReference type="ChEBI" id="CHEBI:58199"/>
        <dbReference type="EC" id="4.4.1.21"/>
    </reaction>
</comment>
<comment type="cofactor">
    <cofactor evidence="1">
        <name>Fe cation</name>
        <dbReference type="ChEBI" id="CHEBI:24875"/>
    </cofactor>
    <text evidence="1">Binds 1 Fe cation per subunit.</text>
</comment>
<comment type="subunit">
    <text evidence="1">Homodimer.</text>
</comment>
<comment type="similarity">
    <text evidence="1">Belongs to the LuxS family.</text>
</comment>
<name>LUXS_YERPB</name>
<proteinExistence type="inferred from homology"/>
<organism>
    <name type="scientific">Yersinia pseudotuberculosis serotype IB (strain PB1/+)</name>
    <dbReference type="NCBI Taxonomy" id="502801"/>
    <lineage>
        <taxon>Bacteria</taxon>
        <taxon>Pseudomonadati</taxon>
        <taxon>Pseudomonadota</taxon>
        <taxon>Gammaproteobacteria</taxon>
        <taxon>Enterobacterales</taxon>
        <taxon>Yersiniaceae</taxon>
        <taxon>Yersinia</taxon>
    </lineage>
</organism>